<evidence type="ECO:0000255" key="1">
    <source>
        <dbReference type="HAMAP-Rule" id="MF_00368"/>
    </source>
</evidence>
<evidence type="ECO:0000305" key="2"/>
<organism>
    <name type="scientific">Escherichia coli O139:H28 (strain E24377A / ETEC)</name>
    <dbReference type="NCBI Taxonomy" id="331111"/>
    <lineage>
        <taxon>Bacteria</taxon>
        <taxon>Pseudomonadati</taxon>
        <taxon>Pseudomonadota</taxon>
        <taxon>Gammaproteobacteria</taxon>
        <taxon>Enterobacterales</taxon>
        <taxon>Enterobacteriaceae</taxon>
        <taxon>Escherichia</taxon>
    </lineage>
</organism>
<keyword id="KW-1185">Reference proteome</keyword>
<keyword id="KW-0687">Ribonucleoprotein</keyword>
<keyword id="KW-0689">Ribosomal protein</keyword>
<feature type="chain" id="PRO_1000059923" description="Large ribosomal subunit protein bL12">
    <location>
        <begin position="1"/>
        <end position="121"/>
    </location>
</feature>
<comment type="function">
    <text evidence="1">Forms part of the ribosomal stalk which helps the ribosome interact with GTP-bound translation factors. Is thus essential for accurate translation.</text>
</comment>
<comment type="subunit">
    <text evidence="1">Homodimer. Part of the ribosomal stalk of the 50S ribosomal subunit. Forms a multimeric L10(L12)X complex, where L10 forms an elongated spine to which 2 to 4 L12 dimers bind in a sequential fashion. Binds GTP-bound translation factors.</text>
</comment>
<comment type="similarity">
    <text evidence="1">Belongs to the bacterial ribosomal protein bL12 family.</text>
</comment>
<name>RL7_ECO24</name>
<gene>
    <name evidence="1" type="primary">rplL</name>
    <name type="ordered locus">EcE24377A_4527</name>
</gene>
<proteinExistence type="inferred from homology"/>
<dbReference type="EMBL" id="CP000800">
    <property type="protein sequence ID" value="ABV18395.1"/>
    <property type="molecule type" value="Genomic_DNA"/>
</dbReference>
<dbReference type="RefSeq" id="WP_000028878.1">
    <property type="nucleotide sequence ID" value="NC_009801.1"/>
</dbReference>
<dbReference type="BMRB" id="A7ZUK0"/>
<dbReference type="SMR" id="A7ZUK0"/>
<dbReference type="GeneID" id="86944525"/>
<dbReference type="KEGG" id="ecw:EcE24377A_4527"/>
<dbReference type="HOGENOM" id="CLU_086499_3_2_6"/>
<dbReference type="Proteomes" id="UP000001122">
    <property type="component" value="Chromosome"/>
</dbReference>
<dbReference type="GO" id="GO:0022625">
    <property type="term" value="C:cytosolic large ribosomal subunit"/>
    <property type="evidence" value="ECO:0007669"/>
    <property type="project" value="TreeGrafter"/>
</dbReference>
<dbReference type="GO" id="GO:0003729">
    <property type="term" value="F:mRNA binding"/>
    <property type="evidence" value="ECO:0007669"/>
    <property type="project" value="TreeGrafter"/>
</dbReference>
<dbReference type="GO" id="GO:0003735">
    <property type="term" value="F:structural constituent of ribosome"/>
    <property type="evidence" value="ECO:0007669"/>
    <property type="project" value="InterPro"/>
</dbReference>
<dbReference type="GO" id="GO:0006412">
    <property type="term" value="P:translation"/>
    <property type="evidence" value="ECO:0007669"/>
    <property type="project" value="UniProtKB-UniRule"/>
</dbReference>
<dbReference type="CDD" id="cd00387">
    <property type="entry name" value="Ribosomal_L7_L12"/>
    <property type="match status" value="1"/>
</dbReference>
<dbReference type="FunFam" id="1.20.5.710:FF:000001">
    <property type="entry name" value="50S ribosomal protein L7/L12"/>
    <property type="match status" value="1"/>
</dbReference>
<dbReference type="FunFam" id="3.30.1390.10:FF:000001">
    <property type="entry name" value="50S ribosomal protein L7/L12"/>
    <property type="match status" value="1"/>
</dbReference>
<dbReference type="Gene3D" id="3.30.1390.10">
    <property type="match status" value="1"/>
</dbReference>
<dbReference type="Gene3D" id="1.20.5.710">
    <property type="entry name" value="Single helix bin"/>
    <property type="match status" value="1"/>
</dbReference>
<dbReference type="HAMAP" id="MF_00368">
    <property type="entry name" value="Ribosomal_bL12"/>
    <property type="match status" value="1"/>
</dbReference>
<dbReference type="InterPro" id="IPR000206">
    <property type="entry name" value="Ribosomal_bL12"/>
</dbReference>
<dbReference type="InterPro" id="IPR013823">
    <property type="entry name" value="Ribosomal_bL12_C"/>
</dbReference>
<dbReference type="InterPro" id="IPR014719">
    <property type="entry name" value="Ribosomal_bL12_C/ClpS-like"/>
</dbReference>
<dbReference type="InterPro" id="IPR008932">
    <property type="entry name" value="Ribosomal_bL12_oligo"/>
</dbReference>
<dbReference type="InterPro" id="IPR036235">
    <property type="entry name" value="Ribosomal_bL12_oligo_N_sf"/>
</dbReference>
<dbReference type="NCBIfam" id="TIGR00855">
    <property type="entry name" value="L12"/>
    <property type="match status" value="1"/>
</dbReference>
<dbReference type="PANTHER" id="PTHR45987">
    <property type="entry name" value="39S RIBOSOMAL PROTEIN L12"/>
    <property type="match status" value="1"/>
</dbReference>
<dbReference type="PANTHER" id="PTHR45987:SF4">
    <property type="entry name" value="LARGE RIBOSOMAL SUBUNIT PROTEIN BL12M"/>
    <property type="match status" value="1"/>
</dbReference>
<dbReference type="Pfam" id="PF00542">
    <property type="entry name" value="Ribosomal_L12"/>
    <property type="match status" value="1"/>
</dbReference>
<dbReference type="Pfam" id="PF16320">
    <property type="entry name" value="Ribosomal_L12_N"/>
    <property type="match status" value="1"/>
</dbReference>
<dbReference type="SUPFAM" id="SSF54736">
    <property type="entry name" value="ClpS-like"/>
    <property type="match status" value="1"/>
</dbReference>
<dbReference type="SUPFAM" id="SSF48300">
    <property type="entry name" value="Ribosomal protein L7/12, oligomerisation (N-terminal) domain"/>
    <property type="match status" value="1"/>
</dbReference>
<sequence length="121" mass="12295">MSITKDQIIEAVAAMSVMDVVELISAMEEKFGVSAAAAVAVAAGPVEAAEEKTEFDVILKAAGANKVAVIKAVRGATGLGLKEAKDLVESAPAALKEGVSKDDAEALKKALEEAGAEVEVK</sequence>
<protein>
    <recommendedName>
        <fullName evidence="1">Large ribosomal subunit protein bL12</fullName>
    </recommendedName>
    <alternativeName>
        <fullName evidence="2">50S ribosomal protein L7/L12</fullName>
    </alternativeName>
</protein>
<reference key="1">
    <citation type="journal article" date="2008" name="J. Bacteriol.">
        <title>The pangenome structure of Escherichia coli: comparative genomic analysis of E. coli commensal and pathogenic isolates.</title>
        <authorList>
            <person name="Rasko D.A."/>
            <person name="Rosovitz M.J."/>
            <person name="Myers G.S.A."/>
            <person name="Mongodin E.F."/>
            <person name="Fricke W.F."/>
            <person name="Gajer P."/>
            <person name="Crabtree J."/>
            <person name="Sebaihia M."/>
            <person name="Thomson N.R."/>
            <person name="Chaudhuri R."/>
            <person name="Henderson I.R."/>
            <person name="Sperandio V."/>
            <person name="Ravel J."/>
        </authorList>
    </citation>
    <scope>NUCLEOTIDE SEQUENCE [LARGE SCALE GENOMIC DNA]</scope>
    <source>
        <strain>E24377A / ETEC</strain>
    </source>
</reference>
<accession>A7ZUK0</accession>